<keyword id="KW-0002">3D-structure</keyword>
<keyword id="KW-0648">Protein biosynthesis</keyword>
<keyword id="KW-0663">Pyridoxal phosphate</keyword>
<keyword id="KW-1185">Reference proteome</keyword>
<keyword id="KW-0694">RNA-binding</keyword>
<keyword id="KW-0711">Selenium</keyword>
<keyword id="KW-0808">Transferase</keyword>
<keyword id="KW-0820">tRNA-binding</keyword>
<gene>
    <name type="primary">spcS</name>
    <name type="ordered locus">MMP0595</name>
</gene>
<accession>Q6LZM9</accession>
<dbReference type="EC" id="2.9.1.2" evidence="3"/>
<dbReference type="EMBL" id="BX950229">
    <property type="protein sequence ID" value="CAF30151.1"/>
    <property type="molecule type" value="Genomic_DNA"/>
</dbReference>
<dbReference type="RefSeq" id="WP_011170539.1">
    <property type="nucleotide sequence ID" value="NC_005791.1"/>
</dbReference>
<dbReference type="PDB" id="2Z67">
    <property type="method" value="X-ray"/>
    <property type="resolution" value="2.50 A"/>
    <property type="chains" value="A/B/C/D=1-436"/>
</dbReference>
<dbReference type="PDBsum" id="2Z67"/>
<dbReference type="SMR" id="Q6LZM9"/>
<dbReference type="STRING" id="267377.MMP0595"/>
<dbReference type="EnsemblBacteria" id="CAF30151">
    <property type="protein sequence ID" value="CAF30151"/>
    <property type="gene ID" value="MMP0595"/>
</dbReference>
<dbReference type="GeneID" id="2762564"/>
<dbReference type="KEGG" id="mmp:MMP0595"/>
<dbReference type="PATRIC" id="fig|267377.15.peg.609"/>
<dbReference type="eggNOG" id="arCOG00119">
    <property type="taxonomic scope" value="Archaea"/>
</dbReference>
<dbReference type="HOGENOM" id="CLU_022508_0_0_2"/>
<dbReference type="OrthoDB" id="64344at2157"/>
<dbReference type="BioCyc" id="MetaCyc:MONOMER-14963"/>
<dbReference type="BRENDA" id="2.9.1.2">
    <property type="organism ID" value="3262"/>
</dbReference>
<dbReference type="UniPathway" id="UPA00906">
    <property type="reaction ID" value="UER00898"/>
</dbReference>
<dbReference type="EvolutionaryTrace" id="Q6LZM9"/>
<dbReference type="Proteomes" id="UP000000590">
    <property type="component" value="Chromosome"/>
</dbReference>
<dbReference type="GO" id="GO:0098621">
    <property type="term" value="F:O-phosphoseryl-tRNA(Sec) selenium transferase activity"/>
    <property type="evidence" value="ECO:0007669"/>
    <property type="project" value="UniProtKB-EC"/>
</dbReference>
<dbReference type="GO" id="GO:0000049">
    <property type="term" value="F:tRNA binding"/>
    <property type="evidence" value="ECO:0007669"/>
    <property type="project" value="UniProtKB-KW"/>
</dbReference>
<dbReference type="GO" id="GO:0001717">
    <property type="term" value="P:conversion of seryl-tRNAsec to selenocys-tRNAsec"/>
    <property type="evidence" value="ECO:0007669"/>
    <property type="project" value="InterPro"/>
</dbReference>
<dbReference type="GO" id="GO:0001514">
    <property type="term" value="P:selenocysteine incorporation"/>
    <property type="evidence" value="ECO:0007669"/>
    <property type="project" value="TreeGrafter"/>
</dbReference>
<dbReference type="Gene3D" id="3.40.640.10">
    <property type="entry name" value="Type I PLP-dependent aspartate aminotransferase-like (Major domain)"/>
    <property type="match status" value="1"/>
</dbReference>
<dbReference type="InterPro" id="IPR015424">
    <property type="entry name" value="PyrdxlP-dep_Trfase"/>
</dbReference>
<dbReference type="InterPro" id="IPR015421">
    <property type="entry name" value="PyrdxlP-dep_Trfase_major"/>
</dbReference>
<dbReference type="InterPro" id="IPR019872">
    <property type="entry name" value="Sec-tRNA_Se_transferase"/>
</dbReference>
<dbReference type="InterPro" id="IPR008829">
    <property type="entry name" value="SepSecS/SepCysS"/>
</dbReference>
<dbReference type="NCBIfam" id="TIGR03531">
    <property type="entry name" value="selenium_SpcS"/>
    <property type="match status" value="1"/>
</dbReference>
<dbReference type="PANTHER" id="PTHR12944:SF2">
    <property type="entry name" value="O-PHOSPHOSERYL-TRNA(SEC) SELENIUM TRANSFERASE"/>
    <property type="match status" value="1"/>
</dbReference>
<dbReference type="PANTHER" id="PTHR12944">
    <property type="entry name" value="SOLUBLE LIVER ANTIGEN/LIVER PANCREAS ANTIGEN"/>
    <property type="match status" value="1"/>
</dbReference>
<dbReference type="Pfam" id="PF05889">
    <property type="entry name" value="SepSecS"/>
    <property type="match status" value="1"/>
</dbReference>
<dbReference type="PIRSF" id="PIRSF017689">
    <property type="entry name" value="SepSecS"/>
    <property type="match status" value="1"/>
</dbReference>
<dbReference type="SUPFAM" id="SSF53383">
    <property type="entry name" value="PLP-dependent transferases"/>
    <property type="match status" value="1"/>
</dbReference>
<comment type="function">
    <text evidence="3">Converts O-phosphoseryl-tRNA(Sec) to selenocysteinyl-tRNA(Sec) required for selenoprotein biosynthesis.</text>
</comment>
<comment type="catalytic activity">
    <reaction evidence="3">
        <text>O-phospho-L-seryl-tRNA(Sec) + selenophosphate + H2O = L-selenocysteinyl-tRNA(Sec) + 2 phosphate</text>
        <dbReference type="Rhea" id="RHEA:25041"/>
        <dbReference type="Rhea" id="RHEA-COMP:9743"/>
        <dbReference type="Rhea" id="RHEA-COMP:9947"/>
        <dbReference type="ChEBI" id="CHEBI:15377"/>
        <dbReference type="ChEBI" id="CHEBI:16144"/>
        <dbReference type="ChEBI" id="CHEBI:43474"/>
        <dbReference type="ChEBI" id="CHEBI:78551"/>
        <dbReference type="ChEBI" id="CHEBI:78573"/>
        <dbReference type="EC" id="2.9.1.2"/>
    </reaction>
</comment>
<comment type="cofactor">
    <cofactor evidence="4">
        <name>pyridoxal 5'-phosphate</name>
        <dbReference type="ChEBI" id="CHEBI:597326"/>
    </cofactor>
</comment>
<comment type="pathway">
    <text evidence="3">Aminoacyl-tRNA biosynthesis; selenocysteinyl-tRNA(Sec) biosynthesis; selenocysteinyl-tRNA(Sec) from L-seryl-tRNA(Sec) (archaeal/eukaryal route): step 2/2.</text>
</comment>
<comment type="subunit">
    <text evidence="4">Homotetramer.</text>
</comment>
<comment type="similarity">
    <text evidence="5">Belongs to the SepSecS family.</text>
</comment>
<protein>
    <recommendedName>
        <fullName>O-phosphoseryl-tRNA(Sec) selenium transferase</fullName>
        <ecNumber evidence="3">2.9.1.2</ecNumber>
    </recommendedName>
    <alternativeName>
        <fullName>Selenocysteine synthase</fullName>
        <shortName>Sec synthase</shortName>
    </alternativeName>
    <alternativeName>
        <fullName>Selenocysteinyl-tRNA(Sec) synthase</fullName>
    </alternativeName>
    <alternativeName>
        <fullName>Sep-tRNA:Sec-tRNA synthase</fullName>
        <shortName>SepSecS</shortName>
    </alternativeName>
</protein>
<reference key="1">
    <citation type="journal article" date="2004" name="J. Bacteriol.">
        <title>Complete genome sequence of the genetically tractable hydrogenotrophic methanogen Methanococcus maripaludis.</title>
        <authorList>
            <person name="Hendrickson E.L."/>
            <person name="Kaul R."/>
            <person name="Zhou Y."/>
            <person name="Bovee D."/>
            <person name="Chapman P."/>
            <person name="Chung J."/>
            <person name="Conway de Macario E."/>
            <person name="Dodsworth J.A."/>
            <person name="Gillett W."/>
            <person name="Graham D.E."/>
            <person name="Hackett M."/>
            <person name="Haydock A.K."/>
            <person name="Kang A."/>
            <person name="Land M.L."/>
            <person name="Levy R."/>
            <person name="Lie T.J."/>
            <person name="Major T.A."/>
            <person name="Moore B.C."/>
            <person name="Porat I."/>
            <person name="Palmeiri A."/>
            <person name="Rouse G."/>
            <person name="Saenphimmachak C."/>
            <person name="Soell D."/>
            <person name="Van Dien S."/>
            <person name="Wang T."/>
            <person name="Whitman W.B."/>
            <person name="Xia Q."/>
            <person name="Zhang Y."/>
            <person name="Larimer F.W."/>
            <person name="Olson M.V."/>
            <person name="Leigh J.A."/>
        </authorList>
    </citation>
    <scope>NUCLEOTIDE SEQUENCE [LARGE SCALE GENOMIC DNA]</scope>
    <source>
        <strain>DSM 14266 / JCM 13030 / NBRC 101832 / S2 / LL</strain>
    </source>
</reference>
<reference key="2">
    <citation type="journal article" date="2006" name="Proc. Natl. Acad. Sci. U.S.A.">
        <title>RNA-dependent conversion of phosphoserine forms selenocysteine in eukaryotes and archaea.</title>
        <authorList>
            <person name="Yuan J."/>
            <person name="Palioura S."/>
            <person name="Salazar J.C."/>
            <person name="Su D."/>
            <person name="O'Donoghue P."/>
            <person name="Hohn M.J."/>
            <person name="Cardoso A.M."/>
            <person name="Whitman W.B."/>
            <person name="Soell D."/>
        </authorList>
    </citation>
    <scope>FUNCTION</scope>
    <scope>CATALYTIC ACTIVITY</scope>
    <scope>PATHWAY</scope>
    <scope>PYRIDOXAL PHOSPHATE AT LYS-278</scope>
    <scope>MUTAGENESIS OF LYS-278</scope>
</reference>
<reference key="3">
    <citation type="journal article" date="2008" name="Nucleic Acids Res.">
        <title>Structural insights into RNA-dependent eukaryal and archaeal selenocysteine formation.</title>
        <authorList>
            <person name="Araiso Y."/>
            <person name="Palioura S."/>
            <person name="Ishitani R."/>
            <person name="Sherrer R.L."/>
            <person name="O'Donoghue P."/>
            <person name="Yuan J."/>
            <person name="Oshikane H."/>
            <person name="Domae N."/>
            <person name="Defranco J."/>
            <person name="Soll D."/>
            <person name="Nureki O."/>
        </authorList>
    </citation>
    <scope>X-RAY CRYSTALLOGRAPHY (2.5 ANGSTROMS) IN COMPLEX WITH PYRIDOXAL PHOSPHATE</scope>
    <scope>SUBUNIT</scope>
    <scope>MUTAGENESIS OF ARG-72; ARG-94; ASN-247 AND ARG-307</scope>
</reference>
<feature type="chain" id="PRO_0000219883" description="O-phosphoseryl-tRNA(Sec) selenium transferase">
    <location>
        <begin position="1"/>
        <end position="436"/>
    </location>
</feature>
<feature type="region of interest" description="Tetramerization" evidence="2">
    <location>
        <begin position="1"/>
        <end position="44"/>
    </location>
</feature>
<feature type="region of interest" description="Phosphate loop (P-loop)" evidence="2">
    <location>
        <begin position="93"/>
        <end position="103"/>
    </location>
</feature>
<feature type="binding site" evidence="4">
    <location>
        <position position="72"/>
    </location>
    <ligand>
        <name>pyridoxal 5'-phosphate</name>
        <dbReference type="ChEBI" id="CHEBI:597326"/>
    </ligand>
</feature>
<feature type="binding site" evidence="4">
    <location>
        <position position="94"/>
    </location>
    <ligand>
        <name>substrate</name>
    </ligand>
</feature>
<feature type="binding site" evidence="4">
    <location>
        <position position="95"/>
    </location>
    <ligand>
        <name>substrate</name>
    </ligand>
</feature>
<feature type="binding site" evidence="4">
    <location>
        <position position="102"/>
    </location>
    <ligand>
        <name>substrate</name>
    </ligand>
</feature>
<feature type="binding site" evidence="4">
    <location>
        <position position="307"/>
    </location>
    <ligand>
        <name>substrate</name>
    </ligand>
</feature>
<feature type="site" description="May act as a substrate filter by repelling compounds with a negatively charged alpha-carboxylate" evidence="1">
    <location>
        <position position="71"/>
    </location>
</feature>
<feature type="modified residue" description="N6-(pyridoxal phosphate)lysine" evidence="3 4">
    <location>
        <position position="278"/>
    </location>
</feature>
<feature type="mutagenesis site" description="Loss of activity." evidence="4">
    <original>R</original>
    <variation>A</variation>
    <location>
        <position position="72"/>
    </location>
</feature>
<feature type="mutagenesis site" description="Loss of activity." evidence="4">
    <original>R</original>
    <variation>A</variation>
    <location>
        <position position="94"/>
    </location>
</feature>
<feature type="mutagenesis site" description="Reduced activity." evidence="4">
    <original>N</original>
    <variation>A</variation>
    <location>
        <position position="247"/>
    </location>
</feature>
<feature type="mutagenesis site" description="Loss of activity." evidence="3">
    <original>K</original>
    <variation>A</variation>
    <location>
        <position position="278"/>
    </location>
</feature>
<feature type="mutagenesis site" description="Loss of activity." evidence="4">
    <original>R</original>
    <variation>A</variation>
    <location>
        <position position="307"/>
    </location>
</feature>
<feature type="strand" evidence="6">
    <location>
        <begin position="8"/>
        <end position="10"/>
    </location>
</feature>
<feature type="helix" evidence="6">
    <location>
        <begin position="12"/>
        <end position="25"/>
    </location>
</feature>
<feature type="helix" evidence="6">
    <location>
        <begin position="27"/>
        <end position="35"/>
    </location>
</feature>
<feature type="helix" evidence="6">
    <location>
        <begin position="45"/>
        <end position="56"/>
    </location>
</feature>
<feature type="helix" evidence="6">
    <location>
        <begin position="60"/>
        <end position="62"/>
    </location>
</feature>
<feature type="helix" evidence="6">
    <location>
        <begin position="79"/>
        <end position="84"/>
    </location>
</feature>
<feature type="turn" evidence="6">
    <location>
        <begin position="85"/>
        <end position="87"/>
    </location>
</feature>
<feature type="strand" evidence="6">
    <location>
        <begin position="92"/>
        <end position="94"/>
    </location>
</feature>
<feature type="helix" evidence="6">
    <location>
        <begin position="106"/>
        <end position="125"/>
    </location>
</feature>
<feature type="strand" evidence="6">
    <location>
        <begin position="131"/>
        <end position="137"/>
    </location>
</feature>
<feature type="helix" evidence="6">
    <location>
        <begin position="139"/>
        <end position="154"/>
    </location>
</feature>
<feature type="strand" evidence="6">
    <location>
        <begin position="158"/>
        <end position="162"/>
    </location>
</feature>
<feature type="helix" evidence="6">
    <location>
        <begin position="167"/>
        <end position="175"/>
    </location>
</feature>
<feature type="strand" evidence="6">
    <location>
        <begin position="179"/>
        <end position="183"/>
    </location>
</feature>
<feature type="strand" evidence="6">
    <location>
        <begin position="186"/>
        <end position="188"/>
    </location>
</feature>
<feature type="strand" evidence="6">
    <location>
        <begin position="191"/>
        <end position="193"/>
    </location>
</feature>
<feature type="helix" evidence="6">
    <location>
        <begin position="196"/>
        <end position="208"/>
    </location>
</feature>
<feature type="strand" evidence="6">
    <location>
        <begin position="213"/>
        <end position="220"/>
    </location>
</feature>
<feature type="helix" evidence="6">
    <location>
        <begin position="230"/>
        <end position="240"/>
    </location>
</feature>
<feature type="strand" evidence="6">
    <location>
        <begin position="244"/>
        <end position="247"/>
    </location>
</feature>
<feature type="turn" evidence="6">
    <location>
        <begin position="249"/>
        <end position="253"/>
    </location>
</feature>
<feature type="helix" evidence="6">
    <location>
        <begin position="255"/>
        <end position="265"/>
    </location>
</feature>
<feature type="strand" evidence="6">
    <location>
        <begin position="270"/>
        <end position="275"/>
    </location>
</feature>
<feature type="helix" evidence="6">
    <location>
        <begin position="276"/>
        <end position="280"/>
    </location>
</feature>
<feature type="strand" evidence="6">
    <location>
        <begin position="287"/>
        <end position="292"/>
    </location>
</feature>
<feature type="helix" evidence="6">
    <location>
        <begin position="294"/>
        <end position="301"/>
    </location>
</feature>
<feature type="helix" evidence="6">
    <location>
        <begin position="311"/>
        <end position="352"/>
    </location>
</feature>
<feature type="strand" evidence="6">
    <location>
        <begin position="363"/>
        <end position="369"/>
    </location>
</feature>
<feature type="helix" evidence="6">
    <location>
        <begin position="374"/>
        <end position="383"/>
    </location>
</feature>
<feature type="strand" evidence="6">
    <location>
        <begin position="386"/>
        <end position="388"/>
    </location>
</feature>
<feature type="strand" evidence="6">
    <location>
        <begin position="390"/>
        <end position="392"/>
    </location>
</feature>
<feature type="helix" evidence="6">
    <location>
        <begin position="397"/>
        <end position="400"/>
    </location>
</feature>
<feature type="strand" evidence="6">
    <location>
        <begin position="410"/>
        <end position="414"/>
    </location>
</feature>
<feature type="helix" evidence="6">
    <location>
        <begin position="421"/>
        <end position="432"/>
    </location>
</feature>
<organism>
    <name type="scientific">Methanococcus maripaludis (strain DSM 14266 / JCM 13030 / NBRC 101832 / S2 / LL)</name>
    <dbReference type="NCBI Taxonomy" id="267377"/>
    <lineage>
        <taxon>Archaea</taxon>
        <taxon>Methanobacteriati</taxon>
        <taxon>Methanobacteriota</taxon>
        <taxon>Methanomada group</taxon>
        <taxon>Methanococci</taxon>
        <taxon>Methanococcales</taxon>
        <taxon>Methanococcaceae</taxon>
        <taxon>Methanococcus</taxon>
    </lineage>
</organism>
<evidence type="ECO:0000250" key="1"/>
<evidence type="ECO:0000250" key="2">
    <source>
        <dbReference type="UniProtKB" id="Q6P6M7"/>
    </source>
</evidence>
<evidence type="ECO:0000269" key="3">
    <source>
    </source>
</evidence>
<evidence type="ECO:0000269" key="4">
    <source>
    </source>
</evidence>
<evidence type="ECO:0000305" key="5"/>
<evidence type="ECO:0007829" key="6">
    <source>
        <dbReference type="PDB" id="2Z67"/>
    </source>
</evidence>
<sequence length="436" mass="48447">MLDFNIEGLIPKNMEKRGELVLNEYLKEIEDVFNHRKIPENGIDDEKIKLFLKFLSMMDTDKDPKSVRIGEREARTYSKIHEELSSGFCHGIGRSGNLVDPQPKASGASIMYALTNKILESFFKQLGLNVHAIATPISTGMSISLCLSAARKKYGSNVVIYPYASHKSPIKAVSFVGMNMRLVETVLDGDRVYVPVEDIENAIKKEIELGNRPCVLSTLTFFPPRNSDDIVEIAKICENYDIPHIINGAYAIQNNYYLEKLKKAFKYRVDAVVSSSDKNLLTPIGGGLVYSTDAEFIKEISLSYPGRASATPVVNTLVSLLSMGSKNYLELVKNQKNSKKLLDELLNDLSKKTGGKFLDVESPIASCISVNSDPVEIAAKLYNLRVTGPRGIKKTDHFGNCYLGTYTHDYIVMNAAIGVRTEDIVNSVSKLEKILL</sequence>
<name>SPCS_METMP</name>
<proteinExistence type="evidence at protein level"/>